<reference key="1">
    <citation type="journal article" date="2014" name="Stand. Genomic Sci.">
        <title>Complete genome sequence of Anabaena variabilis ATCC 29413.</title>
        <authorList>
            <person name="Thiel T."/>
            <person name="Pratte B.S."/>
            <person name="Zhong J."/>
            <person name="Goodwin L."/>
            <person name="Copeland A."/>
            <person name="Lucas S."/>
            <person name="Han C."/>
            <person name="Pitluck S."/>
            <person name="Land M.L."/>
            <person name="Kyrpides N.C."/>
            <person name="Woyke T."/>
        </authorList>
    </citation>
    <scope>NUCLEOTIDE SEQUENCE [LARGE SCALE GENOMIC DNA]</scope>
    <source>
        <strain>ATCC 29413 / PCC 7937</strain>
    </source>
</reference>
<organism>
    <name type="scientific">Trichormus variabilis (strain ATCC 29413 / PCC 7937)</name>
    <name type="common">Anabaena variabilis</name>
    <dbReference type="NCBI Taxonomy" id="240292"/>
    <lineage>
        <taxon>Bacteria</taxon>
        <taxon>Bacillati</taxon>
        <taxon>Cyanobacteriota</taxon>
        <taxon>Cyanophyceae</taxon>
        <taxon>Nostocales</taxon>
        <taxon>Nostocaceae</taxon>
        <taxon>Trichormus</taxon>
    </lineage>
</organism>
<evidence type="ECO:0000255" key="1">
    <source>
        <dbReference type="HAMAP-Rule" id="MF_00014"/>
    </source>
</evidence>
<evidence type="ECO:0000256" key="2">
    <source>
        <dbReference type="SAM" id="MobiDB-lite"/>
    </source>
</evidence>
<sequence>MKRKQDSKGAGSRGQGAGEKKQGAGGRGQGEKKQKKSPVPSPQSPVPDPDEWLQIGKIVSAQGLSGEVRVYPDSDFPERFEVPGTRWLLRPGQTEPQPIELLHGRYLENKNLYVLQLAGVENRTQSEELRGCMLFVPASDRPELGEDEYHVVDLIGMEVFLQTSGDLVGTVVDVIPAGNDLLEVSLHEPVPSDKKPKTVLIPFVKAIAPVVDLETRRIEITPPPGLLELGSGV</sequence>
<keyword id="KW-0143">Chaperone</keyword>
<keyword id="KW-0963">Cytoplasm</keyword>
<keyword id="KW-0690">Ribosome biogenesis</keyword>
<keyword id="KW-0698">rRNA processing</keyword>
<gene>
    <name evidence="1" type="primary">rimM</name>
    <name type="ordered locus">Ava_1091</name>
</gene>
<feature type="chain" id="PRO_0000244108" description="Ribosome maturation factor RimM">
    <location>
        <begin position="1"/>
        <end position="233"/>
    </location>
</feature>
<feature type="domain" description="PRC barrel" evidence="1">
    <location>
        <begin position="145"/>
        <end position="226"/>
    </location>
</feature>
<feature type="region of interest" description="Disordered" evidence="2">
    <location>
        <begin position="1"/>
        <end position="51"/>
    </location>
</feature>
<feature type="compositionally biased region" description="Gly residues" evidence="2">
    <location>
        <begin position="11"/>
        <end position="28"/>
    </location>
</feature>
<accession>Q3ME71</accession>
<dbReference type="EMBL" id="CP000117">
    <property type="protein sequence ID" value="ABA20715.1"/>
    <property type="molecule type" value="Genomic_DNA"/>
</dbReference>
<dbReference type="RefSeq" id="WP_011317938.1">
    <property type="nucleotide sequence ID" value="NC_007413.1"/>
</dbReference>
<dbReference type="SMR" id="Q3ME71"/>
<dbReference type="STRING" id="240292.Ava_1091"/>
<dbReference type="GeneID" id="58723760"/>
<dbReference type="KEGG" id="ava:Ava_1091"/>
<dbReference type="eggNOG" id="COG0806">
    <property type="taxonomic scope" value="Bacteria"/>
</dbReference>
<dbReference type="HOGENOM" id="CLU_077636_3_0_3"/>
<dbReference type="Proteomes" id="UP000002533">
    <property type="component" value="Chromosome"/>
</dbReference>
<dbReference type="GO" id="GO:0005737">
    <property type="term" value="C:cytoplasm"/>
    <property type="evidence" value="ECO:0007669"/>
    <property type="project" value="UniProtKB-SubCell"/>
</dbReference>
<dbReference type="GO" id="GO:0005840">
    <property type="term" value="C:ribosome"/>
    <property type="evidence" value="ECO:0007669"/>
    <property type="project" value="InterPro"/>
</dbReference>
<dbReference type="GO" id="GO:0043022">
    <property type="term" value="F:ribosome binding"/>
    <property type="evidence" value="ECO:0007669"/>
    <property type="project" value="InterPro"/>
</dbReference>
<dbReference type="GO" id="GO:0042274">
    <property type="term" value="P:ribosomal small subunit biogenesis"/>
    <property type="evidence" value="ECO:0007669"/>
    <property type="project" value="UniProtKB-UniRule"/>
</dbReference>
<dbReference type="GO" id="GO:0006364">
    <property type="term" value="P:rRNA processing"/>
    <property type="evidence" value="ECO:0007669"/>
    <property type="project" value="UniProtKB-UniRule"/>
</dbReference>
<dbReference type="Gene3D" id="2.30.30.240">
    <property type="entry name" value="PRC-barrel domain"/>
    <property type="match status" value="1"/>
</dbReference>
<dbReference type="Gene3D" id="2.40.30.60">
    <property type="entry name" value="RimM"/>
    <property type="match status" value="1"/>
</dbReference>
<dbReference type="HAMAP" id="MF_00014">
    <property type="entry name" value="Ribosome_mat_RimM"/>
    <property type="match status" value="1"/>
</dbReference>
<dbReference type="InterPro" id="IPR011033">
    <property type="entry name" value="PRC_barrel-like_sf"/>
</dbReference>
<dbReference type="InterPro" id="IPR056792">
    <property type="entry name" value="PRC_RimM"/>
</dbReference>
<dbReference type="InterPro" id="IPR011961">
    <property type="entry name" value="RimM"/>
</dbReference>
<dbReference type="InterPro" id="IPR002676">
    <property type="entry name" value="RimM_N"/>
</dbReference>
<dbReference type="InterPro" id="IPR036976">
    <property type="entry name" value="RimM_N_sf"/>
</dbReference>
<dbReference type="InterPro" id="IPR009000">
    <property type="entry name" value="Transl_B-barrel_sf"/>
</dbReference>
<dbReference type="NCBIfam" id="TIGR02273">
    <property type="entry name" value="16S_RimM"/>
    <property type="match status" value="1"/>
</dbReference>
<dbReference type="PANTHER" id="PTHR33692">
    <property type="entry name" value="RIBOSOME MATURATION FACTOR RIMM"/>
    <property type="match status" value="1"/>
</dbReference>
<dbReference type="PANTHER" id="PTHR33692:SF1">
    <property type="entry name" value="RIBOSOME MATURATION FACTOR RIMM"/>
    <property type="match status" value="1"/>
</dbReference>
<dbReference type="Pfam" id="PF24986">
    <property type="entry name" value="PRC_RimM"/>
    <property type="match status" value="1"/>
</dbReference>
<dbReference type="Pfam" id="PF01782">
    <property type="entry name" value="RimM"/>
    <property type="match status" value="1"/>
</dbReference>
<dbReference type="SUPFAM" id="SSF50346">
    <property type="entry name" value="PRC-barrel domain"/>
    <property type="match status" value="1"/>
</dbReference>
<dbReference type="SUPFAM" id="SSF50447">
    <property type="entry name" value="Translation proteins"/>
    <property type="match status" value="1"/>
</dbReference>
<protein>
    <recommendedName>
        <fullName evidence="1">Ribosome maturation factor RimM</fullName>
    </recommendedName>
</protein>
<comment type="function">
    <text evidence="1">An accessory protein needed during the final step in the assembly of 30S ribosomal subunit, possibly for assembly of the head region. Essential for efficient processing of 16S rRNA. May be needed both before and after RbfA during the maturation of 16S rRNA. It has affinity for free ribosomal 30S subunits but not for 70S ribosomes.</text>
</comment>
<comment type="subunit">
    <text evidence="1">Binds ribosomal protein uS19.</text>
</comment>
<comment type="subcellular location">
    <subcellularLocation>
        <location evidence="1">Cytoplasm</location>
    </subcellularLocation>
</comment>
<comment type="domain">
    <text evidence="1">The PRC barrel domain binds ribosomal protein uS19.</text>
</comment>
<comment type="similarity">
    <text evidence="1">Belongs to the RimM family.</text>
</comment>
<proteinExistence type="inferred from homology"/>
<name>RIMM_TRIV2</name>